<comment type="function">
    <text>Implicated in immunoproteasome assembly and required for efficient antigen processing. The PA28 activator complex enhances the generation of class I binding peptides by altering the cleavage pattern of the proteasome.</text>
</comment>
<comment type="subunit">
    <text>Heterodimer of PSME1 and PSME2, which forms a hexameric ring.</text>
</comment>
<comment type="similarity">
    <text evidence="3">Belongs to the PA28 family.</text>
</comment>
<gene>
    <name type="primary">PSME2</name>
</gene>
<proteinExistence type="evidence at protein level"/>
<organism>
    <name type="scientific">Bos taurus</name>
    <name type="common">Bovine</name>
    <dbReference type="NCBI Taxonomy" id="9913"/>
    <lineage>
        <taxon>Eukaryota</taxon>
        <taxon>Metazoa</taxon>
        <taxon>Chordata</taxon>
        <taxon>Craniata</taxon>
        <taxon>Vertebrata</taxon>
        <taxon>Euteleostomi</taxon>
        <taxon>Mammalia</taxon>
        <taxon>Eutheria</taxon>
        <taxon>Laurasiatheria</taxon>
        <taxon>Artiodactyla</taxon>
        <taxon>Ruminantia</taxon>
        <taxon>Pecora</taxon>
        <taxon>Bovidae</taxon>
        <taxon>Bovinae</taxon>
        <taxon>Bos</taxon>
    </lineage>
</organism>
<evidence type="ECO:0000250" key="1">
    <source>
        <dbReference type="UniProtKB" id="Q9UL46"/>
    </source>
</evidence>
<evidence type="ECO:0000256" key="2">
    <source>
        <dbReference type="SAM" id="MobiDB-lite"/>
    </source>
</evidence>
<evidence type="ECO:0000305" key="3"/>
<keyword id="KW-0007">Acetylation</keyword>
<keyword id="KW-0903">Direct protein sequencing</keyword>
<keyword id="KW-0597">Phosphoprotein</keyword>
<keyword id="KW-0647">Proteasome</keyword>
<keyword id="KW-1185">Reference proteome</keyword>
<sequence>MAKPCGVRLSGEALKQVDVFRQNLFQEAEEFLYRFLPQKIIYLNQLLQEDSFNVTDLNSLRAPLDIPIPDPPPKDDEMETDKQEKKEVPKCGFLPGNEKVLALLALVKPEVWTLKEKCILVITWIQHLIPKIEDGNDFGVAIQEKVLERVNAVKTKVEAFQTTISKYFSERGDAVAKASKETHVMDYRALVHERDEAVYGDLRAMVLDLRAFYAELYHIISSNLEKIVNPKGEEKPSMY</sequence>
<dbReference type="EMBL" id="BT020957">
    <property type="protein sequence ID" value="AAX08974.1"/>
    <property type="molecule type" value="mRNA"/>
</dbReference>
<dbReference type="EMBL" id="BC102583">
    <property type="protein sequence ID" value="AAI02584.1"/>
    <property type="molecule type" value="mRNA"/>
</dbReference>
<dbReference type="RefSeq" id="NP_001014889.1">
    <property type="nucleotide sequence ID" value="NM_001014889.1"/>
</dbReference>
<dbReference type="SMR" id="Q5E9G3"/>
<dbReference type="CORUM" id="Q5E9G3"/>
<dbReference type="FunCoup" id="Q5E9G3">
    <property type="interactions" value="1118"/>
</dbReference>
<dbReference type="STRING" id="9913.ENSBTAP00000044257"/>
<dbReference type="PeptideAtlas" id="Q5E9G3"/>
<dbReference type="Ensembl" id="ENSBTAT00000007642.2">
    <property type="protein sequence ID" value="ENSBTAP00000007642.1"/>
    <property type="gene ID" value="ENSBTAG00000005814.6"/>
</dbReference>
<dbReference type="GeneID" id="509857"/>
<dbReference type="KEGG" id="bta:509857"/>
<dbReference type="CTD" id="5721"/>
<dbReference type="VEuPathDB" id="HostDB:ENSBTAG00000005814"/>
<dbReference type="VGNC" id="VGNC:33474">
    <property type="gene designation" value="PSME2"/>
</dbReference>
<dbReference type="eggNOG" id="KOG4470">
    <property type="taxonomic scope" value="Eukaryota"/>
</dbReference>
<dbReference type="GeneTree" id="ENSGT00950000183098"/>
<dbReference type="HOGENOM" id="CLU_062515_0_1_1"/>
<dbReference type="InParanoid" id="Q5E9G3"/>
<dbReference type="OMA" id="KKPPKCG"/>
<dbReference type="OrthoDB" id="6591885at2759"/>
<dbReference type="Reactome" id="R-BTA-9907900">
    <property type="pathway name" value="Proteasome assembly"/>
</dbReference>
<dbReference type="Proteomes" id="UP000009136">
    <property type="component" value="Chromosome 10"/>
</dbReference>
<dbReference type="Bgee" id="ENSBTAG00000005814">
    <property type="expression patterns" value="Expressed in abomasum and 105 other cell types or tissues"/>
</dbReference>
<dbReference type="GO" id="GO:0005737">
    <property type="term" value="C:cytoplasm"/>
    <property type="evidence" value="ECO:0000318"/>
    <property type="project" value="GO_Central"/>
</dbReference>
<dbReference type="GO" id="GO:0005654">
    <property type="term" value="C:nucleoplasm"/>
    <property type="evidence" value="ECO:0000318"/>
    <property type="project" value="GO_Central"/>
</dbReference>
<dbReference type="GO" id="GO:0008537">
    <property type="term" value="C:proteasome activator complex"/>
    <property type="evidence" value="ECO:0007669"/>
    <property type="project" value="InterPro"/>
</dbReference>
<dbReference type="GO" id="GO:0061133">
    <property type="term" value="F:endopeptidase activator activity"/>
    <property type="evidence" value="ECO:0000318"/>
    <property type="project" value="GO_Central"/>
</dbReference>
<dbReference type="GO" id="GO:2000045">
    <property type="term" value="P:regulation of G1/S transition of mitotic cell cycle"/>
    <property type="evidence" value="ECO:0000318"/>
    <property type="project" value="GO_Central"/>
</dbReference>
<dbReference type="GO" id="GO:0061136">
    <property type="term" value="P:regulation of proteasomal protein catabolic process"/>
    <property type="evidence" value="ECO:0000318"/>
    <property type="project" value="GO_Central"/>
</dbReference>
<dbReference type="FunFam" id="1.20.120.180:FF:000002">
    <property type="entry name" value="Proteasome activator complex subunit 1"/>
    <property type="match status" value="1"/>
</dbReference>
<dbReference type="FunFam" id="1.20.5.120:FF:000002">
    <property type="entry name" value="proteasome activator complex subunit 2"/>
    <property type="match status" value="1"/>
</dbReference>
<dbReference type="Gene3D" id="1.20.120.180">
    <property type="entry name" value="Proteasome activator pa28, C-terminal domain"/>
    <property type="match status" value="1"/>
</dbReference>
<dbReference type="Gene3D" id="1.20.5.120">
    <property type="entry name" value="Proteasome activator pa28, N-terminal domain"/>
    <property type="match status" value="1"/>
</dbReference>
<dbReference type="InterPro" id="IPR003186">
    <property type="entry name" value="PA28_C"/>
</dbReference>
<dbReference type="InterPro" id="IPR036997">
    <property type="entry name" value="PA28_C_sf"/>
</dbReference>
<dbReference type="InterPro" id="IPR036996">
    <property type="entry name" value="PA28_N_sf"/>
</dbReference>
<dbReference type="InterPro" id="IPR009077">
    <property type="entry name" value="Proteasome_activ_PA28"/>
</dbReference>
<dbReference type="InterPro" id="IPR003185">
    <property type="entry name" value="Proteasome_activ_PA28_N"/>
</dbReference>
<dbReference type="InterPro" id="IPR036252">
    <property type="entry name" value="Proteasome_activ_sf"/>
</dbReference>
<dbReference type="PANTHER" id="PTHR10660:SF6">
    <property type="entry name" value="PROTEASOME ACTIVATOR COMPLEX SUBUNIT 2"/>
    <property type="match status" value="1"/>
</dbReference>
<dbReference type="PANTHER" id="PTHR10660">
    <property type="entry name" value="PROTEASOME REGULATOR PA28"/>
    <property type="match status" value="1"/>
</dbReference>
<dbReference type="Pfam" id="PF02252">
    <property type="entry name" value="PA28_C"/>
    <property type="match status" value="1"/>
</dbReference>
<dbReference type="Pfam" id="PF02251">
    <property type="entry name" value="PA28_N"/>
    <property type="match status" value="1"/>
</dbReference>
<dbReference type="SUPFAM" id="SSF47216">
    <property type="entry name" value="Proteasome activator"/>
    <property type="match status" value="1"/>
</dbReference>
<feature type="initiator methionine" description="Removed" evidence="1">
    <location>
        <position position="1"/>
    </location>
</feature>
<feature type="chain" id="PRO_0000161784" description="Proteasome activator complex subunit 2">
    <location>
        <begin position="2"/>
        <end position="239"/>
    </location>
</feature>
<feature type="region of interest" description="Disordered" evidence="2">
    <location>
        <begin position="65"/>
        <end position="86"/>
    </location>
</feature>
<feature type="compositionally biased region" description="Basic and acidic residues" evidence="2">
    <location>
        <begin position="72"/>
        <end position="86"/>
    </location>
</feature>
<feature type="modified residue" description="N-acetylalanine" evidence="1">
    <location>
        <position position="2"/>
    </location>
</feature>
<feature type="modified residue" description="Phosphoserine" evidence="1">
    <location>
        <position position="10"/>
    </location>
</feature>
<name>PSME2_BOVIN</name>
<protein>
    <recommendedName>
        <fullName>Proteasome activator complex subunit 2</fullName>
    </recommendedName>
    <alternativeName>
        <fullName>Proteasome activator 28 subunit beta</fullName>
        <shortName>PA28b</shortName>
        <shortName>PA28beta</shortName>
    </alternativeName>
</protein>
<reference key="1">
    <citation type="journal article" date="2005" name="BMC Genomics">
        <title>Characterization of 954 bovine full-CDS cDNA sequences.</title>
        <authorList>
            <person name="Harhay G.P."/>
            <person name="Sonstegard T.S."/>
            <person name="Keele J.W."/>
            <person name="Heaton M.P."/>
            <person name="Clawson M.L."/>
            <person name="Snelling W.M."/>
            <person name="Wiedmann R.T."/>
            <person name="Van Tassell C.P."/>
            <person name="Smith T.P.L."/>
        </authorList>
    </citation>
    <scope>NUCLEOTIDE SEQUENCE [LARGE SCALE MRNA]</scope>
</reference>
<reference key="2">
    <citation type="submission" date="2005-08" db="EMBL/GenBank/DDBJ databases">
        <authorList>
            <consortium name="NIH - Mammalian Gene Collection (MGC) project"/>
        </authorList>
    </citation>
    <scope>NUCLEOTIDE SEQUENCE [LARGE SCALE MRNA]</scope>
    <source>
        <strain>Crossbred X Angus</strain>
        <tissue>Ileum</tissue>
    </source>
</reference>
<reference key="3">
    <citation type="journal article" date="1994" name="J. Biol. Chem.">
        <title>PA28, an activator of the 20 S proteasome, is composed of two nonidentical but homologous subunits.</title>
        <authorList>
            <person name="Mott J.D."/>
            <person name="Pramanik B.C."/>
            <person name="Moomaw C.R."/>
            <person name="Afendis S.J."/>
            <person name="DeMartino G.N."/>
            <person name="Slaughter C.A."/>
        </authorList>
    </citation>
    <scope>PROTEIN SEQUENCE OF 40-81; 189-203 AND 211-226</scope>
    <source>
        <tissue>Heart</tissue>
    </source>
</reference>
<accession>Q5E9G3</accession>
<accession>Q3T038</accession>
<accession>Q9TR87</accession>
<accession>Q9TR88</accession>
<accession>Q9TR89</accession>
<accession>Q9TR90</accession>